<protein>
    <recommendedName>
        <fullName>Phospholipase A2-beta</fullName>
        <ecNumber>3.1.1.4</ecNumber>
    </recommendedName>
    <alternativeName>
        <fullName>Secretory phospholipase A2-beta</fullName>
        <shortName>AtsPLA2-beta</shortName>
    </alternativeName>
</protein>
<feature type="signal peptide" evidence="2">
    <location>
        <begin position="1"/>
        <end position="28"/>
    </location>
</feature>
<feature type="chain" id="PRO_0000417562" description="Phospholipase A2-beta">
    <location>
        <begin position="29"/>
        <end position="147"/>
    </location>
</feature>
<feature type="short sequence motif" description="Prevents secretion from ER" evidence="2">
    <location>
        <begin position="144"/>
        <end position="147"/>
    </location>
</feature>
<feature type="active site" evidence="3">
    <location>
        <position position="74"/>
    </location>
</feature>
<feature type="binding site" evidence="1">
    <location>
        <position position="50"/>
    </location>
    <ligand>
        <name>Ca(2+)</name>
        <dbReference type="ChEBI" id="CHEBI:29108"/>
    </ligand>
</feature>
<feature type="binding site" evidence="1">
    <location>
        <position position="52"/>
    </location>
    <ligand>
        <name>Ca(2+)</name>
        <dbReference type="ChEBI" id="CHEBI:29108"/>
    </ligand>
</feature>
<feature type="binding site" evidence="1">
    <location>
        <position position="55"/>
    </location>
    <ligand>
        <name>Ca(2+)</name>
        <dbReference type="ChEBI" id="CHEBI:29108"/>
    </ligand>
</feature>
<feature type="binding site" evidence="1">
    <location>
        <position position="75"/>
    </location>
    <ligand>
        <name>Ca(2+)</name>
        <dbReference type="ChEBI" id="CHEBI:29108"/>
    </ligand>
</feature>
<feature type="disulfide bond" evidence="1">
    <location>
        <begin position="31"/>
        <end position="58"/>
    </location>
</feature>
<feature type="disulfide bond" evidence="1">
    <location>
        <begin position="35"/>
        <end position="64"/>
    </location>
</feature>
<feature type="disulfide bond" evidence="1">
    <location>
        <begin position="40"/>
        <end position="117"/>
    </location>
</feature>
<feature type="disulfide bond" evidence="1">
    <location>
        <begin position="51"/>
        <end position="71"/>
    </location>
</feature>
<feature type="disulfide bond" evidence="1">
    <location>
        <begin position="70"/>
        <end position="95"/>
    </location>
</feature>
<feature type="disulfide bond" evidence="1">
    <location>
        <begin position="77"/>
        <end position="88"/>
    </location>
</feature>
<accession>Q8GZB4</accession>
<accession>O82208</accession>
<reference key="1">
    <citation type="journal article" date="2003" name="Plant Cell">
        <title>Secretory low molecular weight phospholipase A2 plays important roles in cell elongation and shoot gravitropism in Arabidopsis.</title>
        <authorList>
            <person name="Lee H.Y."/>
            <person name="Bahn S.C."/>
            <person name="Kang Y.M."/>
            <person name="Lee K.H."/>
            <person name="Kim H.J."/>
            <person name="Noh E.K."/>
            <person name="Palta J.P."/>
            <person name="Shin J.S."/>
            <person name="Ryu S.B."/>
        </authorList>
    </citation>
    <scope>NUCLEOTIDE SEQUENCE [MRNA]</scope>
    <scope>FUNCTION</scope>
    <scope>CATALYTIC ACTIVITY</scope>
    <scope>TISSUE SPECIFICITY</scope>
    <scope>INDUCTION BY AUXIN</scope>
    <scope>DEVELOPMENTAL STAGE</scope>
    <scope>SUBCELLULAR LOCATION</scope>
</reference>
<reference key="2">
    <citation type="journal article" date="1999" name="Nature">
        <title>Sequence and analysis of chromosome 2 of the plant Arabidopsis thaliana.</title>
        <authorList>
            <person name="Lin X."/>
            <person name="Kaul S."/>
            <person name="Rounsley S.D."/>
            <person name="Shea T.P."/>
            <person name="Benito M.-I."/>
            <person name="Town C.D."/>
            <person name="Fujii C.Y."/>
            <person name="Mason T.M."/>
            <person name="Bowman C.L."/>
            <person name="Barnstead M.E."/>
            <person name="Feldblyum T.V."/>
            <person name="Buell C.R."/>
            <person name="Ketchum K.A."/>
            <person name="Lee J.J."/>
            <person name="Ronning C.M."/>
            <person name="Koo H.L."/>
            <person name="Moffat K.S."/>
            <person name="Cronin L.A."/>
            <person name="Shen M."/>
            <person name="Pai G."/>
            <person name="Van Aken S."/>
            <person name="Umayam L."/>
            <person name="Tallon L.J."/>
            <person name="Gill J.E."/>
            <person name="Adams M.D."/>
            <person name="Carrera A.J."/>
            <person name="Creasy T.H."/>
            <person name="Goodman H.M."/>
            <person name="Somerville C.R."/>
            <person name="Copenhaver G.P."/>
            <person name="Preuss D."/>
            <person name="Nierman W.C."/>
            <person name="White O."/>
            <person name="Eisen J.A."/>
            <person name="Salzberg S.L."/>
            <person name="Fraser C.M."/>
            <person name="Venter J.C."/>
        </authorList>
    </citation>
    <scope>NUCLEOTIDE SEQUENCE [LARGE SCALE GENOMIC DNA]</scope>
    <source>
        <strain>cv. Columbia</strain>
    </source>
</reference>
<reference key="3">
    <citation type="journal article" date="2017" name="Plant J.">
        <title>Araport11: a complete reannotation of the Arabidopsis thaliana reference genome.</title>
        <authorList>
            <person name="Cheng C.Y."/>
            <person name="Krishnakumar V."/>
            <person name="Chan A.P."/>
            <person name="Thibaud-Nissen F."/>
            <person name="Schobel S."/>
            <person name="Town C.D."/>
        </authorList>
    </citation>
    <scope>GENOME REANNOTATION</scope>
    <source>
        <strain>cv. Columbia</strain>
    </source>
</reference>
<reference key="4">
    <citation type="journal article" date="2004" name="Genome Res.">
        <title>Whole genome sequence comparisons and 'full-length' cDNA sequences: a combined approach to evaluate and improve Arabidopsis genome annotation.</title>
        <authorList>
            <person name="Castelli V."/>
            <person name="Aury J.-M."/>
            <person name="Jaillon O."/>
            <person name="Wincker P."/>
            <person name="Clepet C."/>
            <person name="Menard M."/>
            <person name="Cruaud C."/>
            <person name="Quetier F."/>
            <person name="Scarpelli C."/>
            <person name="Schaechter V."/>
            <person name="Temple G."/>
            <person name="Caboche M."/>
            <person name="Weissenbach J."/>
            <person name="Salanoubat M."/>
        </authorList>
    </citation>
    <scope>NUCLEOTIDE SEQUENCE [LARGE SCALE MRNA]</scope>
    <source>
        <strain>cv. Columbia</strain>
    </source>
</reference>
<reference key="5">
    <citation type="journal article" date="2004" name="Trends Plant Sci.">
        <title>Phospholipid-derived signaling mediated by phospholipase A in plants.</title>
        <authorList>
            <person name="Ryu S.B."/>
        </authorList>
    </citation>
    <scope>GENE FAMILY</scope>
    <scope>NOMENCLATURE</scope>
</reference>
<reference key="6">
    <citation type="journal article" date="2005" name="Prog. Lipid Res.">
        <title>Multiple forms of secretory phospholipase A2 in plants.</title>
        <authorList>
            <person name="Lee H.Y."/>
            <person name="Bahn S.C."/>
            <person name="Shin J.S."/>
            <person name="Hwang I."/>
            <person name="Back K."/>
            <person name="Doelling J.H."/>
            <person name="Ryu S.B."/>
        </authorList>
    </citation>
    <scope>TISSUE SPECIFICITY</scope>
</reference>
<reference key="7">
    <citation type="journal article" date="2008" name="J. Exp. Bot.">
        <title>Phospholipase A2beta mediates light-induced stomatal opening in Arabidopsis.</title>
        <authorList>
            <person name="Seo J."/>
            <person name="Lee H.Y."/>
            <person name="Choi H."/>
            <person name="Choi Y."/>
            <person name="Lee Y."/>
            <person name="Kim Y.W."/>
            <person name="Ryu S.B."/>
            <person name="Lee Y."/>
        </authorList>
    </citation>
    <scope>FUNCTION</scope>
    <scope>DISRUPTION PHENOTYPE</scope>
    <scope>INDUCTION BY LIGHT</scope>
    <scope>ACTIVITY REGULATION</scope>
    <scope>TISSUE SPECIFICITY</scope>
</reference>
<reference key="8">
    <citation type="journal article" date="2010" name="Plant Cell">
        <title>Phospholipase A(2) is required for PIN-FORMED protein trafficking to the plasma membrane in the Arabidopsis root.</title>
        <authorList>
            <person name="Lee O.R."/>
            <person name="Kim S.J."/>
            <person name="Kim H.J."/>
            <person name="Hong J.K."/>
            <person name="Ryu S.B."/>
            <person name="Lee S.H."/>
            <person name="Ganguly A."/>
            <person name="Cho H.T."/>
        </authorList>
    </citation>
    <scope>SUBCELLULAR LOCATION</scope>
</reference>
<reference key="9">
    <citation type="journal article" date="2011" name="Plant Cell">
        <title>Endoplasmic reticulum- and Golgi-localized phospholipase A2 plays critical roles in Arabidopsis pollen development and germination.</title>
        <authorList>
            <person name="Kim H.J."/>
            <person name="Ok S.H."/>
            <person name="Bahn S.C."/>
            <person name="Jang J."/>
            <person name="Oh S.A."/>
            <person name="Park S.K."/>
            <person name="Twell D."/>
            <person name="Ryu S.B."/>
            <person name="Shin J.S."/>
        </authorList>
    </citation>
    <scope>FUNCTION</scope>
    <scope>TISSUE SPECIFICITY</scope>
    <scope>DEVELOPMENTAL STAGE</scope>
</reference>
<comment type="function">
    <text evidence="4 6 7">PA2 catalyzes the calcium-dependent hydrolysis of the 2-acyl groups in 3-sn-phosphoglycerides. Releases lysophospholipids (LPLs) and free fatty acids (FFAs) from membrane phospholipids in response to hormones and other external stimuli. Regulates the process of cell elongation and plays important roles in shoot gravitropism by mediating auxin-induced cell elongation. Involved in stomatal opening in response to light. Plays a role in pollen development and germination and tube growth.</text>
</comment>
<comment type="catalytic activity">
    <reaction evidence="3 4">
        <text>a 1,2-diacyl-sn-glycero-3-phosphocholine + H2O = a 1-acyl-sn-glycero-3-phosphocholine + a fatty acid + H(+)</text>
        <dbReference type="Rhea" id="RHEA:15801"/>
        <dbReference type="ChEBI" id="CHEBI:15377"/>
        <dbReference type="ChEBI" id="CHEBI:15378"/>
        <dbReference type="ChEBI" id="CHEBI:28868"/>
        <dbReference type="ChEBI" id="CHEBI:57643"/>
        <dbReference type="ChEBI" id="CHEBI:58168"/>
        <dbReference type="EC" id="3.1.1.4"/>
    </reaction>
</comment>
<comment type="cofactor">
    <cofactor>
        <name>Ca(2+)</name>
        <dbReference type="ChEBI" id="CHEBI:29108"/>
    </cofactor>
    <text>Binds 1 Ca(2+) ion per subunit.</text>
</comment>
<comment type="activity regulation">
    <text evidence="6">Inhibited by aristolochic acid.</text>
</comment>
<comment type="subcellular location">
    <subcellularLocation>
        <location>Secreted</location>
    </subcellularLocation>
    <subcellularLocation>
        <location>Endoplasmic reticulum</location>
    </subcellularLocation>
</comment>
<comment type="alternative products">
    <event type="alternative splicing"/>
    <isoform>
        <id>Q8GZB4-1</id>
        <name>1</name>
        <sequence type="displayed"/>
    </isoform>
    <text>A number of isoforms are produced. According to EST sequences.</text>
</comment>
<comment type="tissue specificity">
    <text evidence="4 5 6 7">Ubiquitous but expressed at a low level. Detected in vascular tissues and in the guard cells. Predominantly detected in pollen.</text>
</comment>
<comment type="developmental stage">
    <text evidence="4 7">Expressed in the actively growing young stages of Arabidopsis seedlings. When plants grew, however, expression was evident only in cotyledons, primary leaves, and hypocotyls. The activity decreased in the secondary leaves, being detectable only in vascular tissues. In the roots as well, expression was localized mostly in vascular tissues. Expression becomes highly active when floral shoots bolted, especially in the young or actively growing tissues of inflorescence stems. Continuously expressed during pollen development.</text>
</comment>
<comment type="induction">
    <text evidence="4 6">By auxin. By light.</text>
</comment>
<comment type="disruption phenotype">
    <text evidence="6">RNAi mutant exhibits delayed light-induced stomatal opening.</text>
</comment>
<comment type="miscellaneous">
    <text>The enzyme has a preference towards palmitoyl acyl chain over linoleoyl acyl chain. It also has a slight preference for phosphatidylethanolamine over phosphatidylcholine.</text>
</comment>
<comment type="similarity">
    <text evidence="8">Belongs to the phospholipase A2 family.</text>
</comment>
<comment type="sequence caution" evidence="8">
    <conflict type="erroneous gene model prediction">
        <sequence resource="EMBL-CDS" id="AAC62146"/>
    </conflict>
</comment>
<name>PLA2B_ARATH</name>
<proteinExistence type="evidence at protein level"/>
<evidence type="ECO:0000250" key="1"/>
<evidence type="ECO:0000255" key="2"/>
<evidence type="ECO:0000255" key="3">
    <source>
        <dbReference type="PROSITE-ProRule" id="PRU10035"/>
    </source>
</evidence>
<evidence type="ECO:0000269" key="4">
    <source>
    </source>
</evidence>
<evidence type="ECO:0000269" key="5">
    <source>
    </source>
</evidence>
<evidence type="ECO:0000269" key="6">
    <source>
    </source>
</evidence>
<evidence type="ECO:0000269" key="7">
    <source>
    </source>
</evidence>
<evidence type="ECO:0000305" key="8"/>
<gene>
    <name type="primary">PLA2-BETA</name>
    <name type="ordered locus">At2g19690</name>
    <name type="ORF">F6F22.28</name>
</gene>
<dbReference type="EC" id="3.1.1.4"/>
<dbReference type="EMBL" id="AF541915">
    <property type="protein sequence ID" value="AAN77229.1"/>
    <property type="molecule type" value="mRNA"/>
</dbReference>
<dbReference type="EMBL" id="AC005169">
    <property type="protein sequence ID" value="AAC62146.1"/>
    <property type="status" value="ALT_SEQ"/>
    <property type="molecule type" value="Genomic_DNA"/>
</dbReference>
<dbReference type="EMBL" id="CP002685">
    <property type="protein sequence ID" value="AEC06913.1"/>
    <property type="molecule type" value="Genomic_DNA"/>
</dbReference>
<dbReference type="EMBL" id="BX821623">
    <property type="status" value="NOT_ANNOTATED_CDS"/>
    <property type="molecule type" value="mRNA"/>
</dbReference>
<dbReference type="PIR" id="H84579">
    <property type="entry name" value="H84579"/>
</dbReference>
<dbReference type="RefSeq" id="NP_179559.2">
    <molecule id="Q8GZB4-1"/>
    <property type="nucleotide sequence ID" value="NM_127527.4"/>
</dbReference>
<dbReference type="SMR" id="Q8GZB4"/>
<dbReference type="FunCoup" id="Q8GZB4">
    <property type="interactions" value="34"/>
</dbReference>
<dbReference type="STRING" id="3702.Q8GZB4"/>
<dbReference type="iPTMnet" id="Q8GZB4"/>
<dbReference type="PaxDb" id="3702-AT2G19690.2"/>
<dbReference type="ProteomicsDB" id="236743">
    <molecule id="Q8GZB4-1"/>
</dbReference>
<dbReference type="EnsemblPlants" id="AT2G19690.1">
    <molecule id="Q8GZB4-1"/>
    <property type="protein sequence ID" value="AT2G19690.1"/>
    <property type="gene ID" value="AT2G19690"/>
</dbReference>
<dbReference type="GeneID" id="816488"/>
<dbReference type="Gramene" id="AT2G19690.1">
    <molecule id="Q8GZB4-1"/>
    <property type="protein sequence ID" value="AT2G19690.1"/>
    <property type="gene ID" value="AT2G19690"/>
</dbReference>
<dbReference type="KEGG" id="ath:AT2G19690"/>
<dbReference type="Araport" id="AT2G19690"/>
<dbReference type="TAIR" id="AT2G19690">
    <property type="gene designation" value="PLA2-BETA"/>
</dbReference>
<dbReference type="eggNOG" id="ENOG502RZIE">
    <property type="taxonomic scope" value="Eukaryota"/>
</dbReference>
<dbReference type="HOGENOM" id="CLU_115623_1_0_1"/>
<dbReference type="InParanoid" id="Q8GZB4"/>
<dbReference type="OMA" id="DTIGIKY"/>
<dbReference type="OrthoDB" id="566013at2759"/>
<dbReference type="PhylomeDB" id="Q8GZB4"/>
<dbReference type="BioCyc" id="ARA:AT2G19690-MONOMER"/>
<dbReference type="PRO" id="PR:Q8GZB4"/>
<dbReference type="Proteomes" id="UP000006548">
    <property type="component" value="Chromosome 2"/>
</dbReference>
<dbReference type="ExpressionAtlas" id="Q8GZB4">
    <property type="expression patterns" value="baseline and differential"/>
</dbReference>
<dbReference type="GO" id="GO:0005783">
    <property type="term" value="C:endoplasmic reticulum"/>
    <property type="evidence" value="ECO:0000314"/>
    <property type="project" value="UniProtKB"/>
</dbReference>
<dbReference type="GO" id="GO:0005576">
    <property type="term" value="C:extracellular region"/>
    <property type="evidence" value="ECO:0007669"/>
    <property type="project" value="UniProtKB-SubCell"/>
</dbReference>
<dbReference type="GO" id="GO:0046872">
    <property type="term" value="F:metal ion binding"/>
    <property type="evidence" value="ECO:0007669"/>
    <property type="project" value="UniProtKB-KW"/>
</dbReference>
<dbReference type="GO" id="GO:0004623">
    <property type="term" value="F:phospholipase A2 activity"/>
    <property type="evidence" value="ECO:0000314"/>
    <property type="project" value="UniProtKB"/>
</dbReference>
<dbReference type="GO" id="GO:0050482">
    <property type="term" value="P:arachidonate secretion"/>
    <property type="evidence" value="ECO:0007669"/>
    <property type="project" value="InterPro"/>
</dbReference>
<dbReference type="GO" id="GO:0009630">
    <property type="term" value="P:gravitropism"/>
    <property type="evidence" value="ECO:0000315"/>
    <property type="project" value="UniProtKB"/>
</dbReference>
<dbReference type="GO" id="GO:0016042">
    <property type="term" value="P:lipid catabolic process"/>
    <property type="evidence" value="ECO:0007669"/>
    <property type="project" value="UniProtKB-KW"/>
</dbReference>
<dbReference type="GO" id="GO:0006644">
    <property type="term" value="P:phospholipid metabolic process"/>
    <property type="evidence" value="ECO:0007669"/>
    <property type="project" value="InterPro"/>
</dbReference>
<dbReference type="GO" id="GO:0009846">
    <property type="term" value="P:pollen germination"/>
    <property type="evidence" value="ECO:0000314"/>
    <property type="project" value="UniProtKB"/>
</dbReference>
<dbReference type="GO" id="GO:0009860">
    <property type="term" value="P:pollen tube growth"/>
    <property type="evidence" value="ECO:0000314"/>
    <property type="project" value="UniProtKB"/>
</dbReference>
<dbReference type="GO" id="GO:0030307">
    <property type="term" value="P:positive regulation of cell growth"/>
    <property type="evidence" value="ECO:0000315"/>
    <property type="project" value="UniProtKB"/>
</dbReference>
<dbReference type="GO" id="GO:0009733">
    <property type="term" value="P:response to auxin"/>
    <property type="evidence" value="ECO:0000270"/>
    <property type="project" value="UniProtKB"/>
</dbReference>
<dbReference type="CDD" id="cd04706">
    <property type="entry name" value="PLA2_plant"/>
    <property type="match status" value="1"/>
</dbReference>
<dbReference type="FunFam" id="1.20.90.10:FF:000005">
    <property type="entry name" value="Secretory phospholipase A2"/>
    <property type="match status" value="1"/>
</dbReference>
<dbReference type="Gene3D" id="1.20.90.10">
    <property type="entry name" value="Phospholipase A2 domain"/>
    <property type="match status" value="1"/>
</dbReference>
<dbReference type="InterPro" id="IPR036444">
    <property type="entry name" value="PLipase_A2_dom_sf"/>
</dbReference>
<dbReference type="InterPro" id="IPR033113">
    <property type="entry name" value="PLipase_A2_His_AS"/>
</dbReference>
<dbReference type="SUPFAM" id="SSF48619">
    <property type="entry name" value="Phospholipase A2, PLA2"/>
    <property type="match status" value="1"/>
</dbReference>
<dbReference type="PROSITE" id="PS00118">
    <property type="entry name" value="PA2_HIS"/>
    <property type="match status" value="1"/>
</dbReference>
<organism>
    <name type="scientific">Arabidopsis thaliana</name>
    <name type="common">Mouse-ear cress</name>
    <dbReference type="NCBI Taxonomy" id="3702"/>
    <lineage>
        <taxon>Eukaryota</taxon>
        <taxon>Viridiplantae</taxon>
        <taxon>Streptophyta</taxon>
        <taxon>Embryophyta</taxon>
        <taxon>Tracheophyta</taxon>
        <taxon>Spermatophyta</taxon>
        <taxon>Magnoliopsida</taxon>
        <taxon>eudicotyledons</taxon>
        <taxon>Gunneridae</taxon>
        <taxon>Pentapetalae</taxon>
        <taxon>rosids</taxon>
        <taxon>malvids</taxon>
        <taxon>Brassicales</taxon>
        <taxon>Brassicaceae</taxon>
        <taxon>Camelineae</taxon>
        <taxon>Arabidopsis</taxon>
    </lineage>
</organism>
<keyword id="KW-0025">Alternative splicing</keyword>
<keyword id="KW-0106">Calcium</keyword>
<keyword id="KW-1015">Disulfide bond</keyword>
<keyword id="KW-0256">Endoplasmic reticulum</keyword>
<keyword id="KW-0378">Hydrolase</keyword>
<keyword id="KW-0442">Lipid degradation</keyword>
<keyword id="KW-0443">Lipid metabolism</keyword>
<keyword id="KW-0479">Metal-binding</keyword>
<keyword id="KW-1185">Reference proteome</keyword>
<keyword id="KW-0964">Secreted</keyword>
<keyword id="KW-0732">Signal</keyword>
<sequence>MMFRTSLMRFAAAFFAIVFVVLVGVARSEECTRTCIAQNCDTLSIRYGKYCGIGHSGCPGEEPCDDLDACCKIHDHCVELNGMTNISCHKKFQRCVNRLSKAIKQSKNKKVGFSTKCPYSVVIPTVNQGMDIGILFSQLGNDMKTEL</sequence>